<dbReference type="EMBL" id="AC010184">
    <property type="status" value="NOT_ANNOTATED_CDS"/>
    <property type="molecule type" value="Genomic_DNA"/>
</dbReference>
<dbReference type="EMBL" id="CH471052">
    <property type="protein sequence ID" value="EAW79004.1"/>
    <property type="molecule type" value="Genomic_DNA"/>
</dbReference>
<dbReference type="EMBL" id="CH471052">
    <property type="protein sequence ID" value="EAW79005.1"/>
    <property type="molecule type" value="Genomic_DNA"/>
</dbReference>
<dbReference type="EMBL" id="AK092355">
    <property type="protein sequence ID" value="BAC03868.1"/>
    <property type="status" value="ALT_FRAME"/>
    <property type="molecule type" value="mRNA"/>
</dbReference>
<dbReference type="CCDS" id="CCDS43157.1"/>
<dbReference type="RefSeq" id="NP_001073881.2">
    <property type="nucleotide sequence ID" value="NM_001080412.3"/>
</dbReference>
<dbReference type="RefSeq" id="NP_001337028.1">
    <property type="nucleotide sequence ID" value="NM_001350099.2"/>
</dbReference>
<dbReference type="RefSeq" id="NP_001337029.1">
    <property type="nucleotide sequence ID" value="NM_001350100.2"/>
</dbReference>
<dbReference type="RefSeq" id="NP_001363041.1">
    <property type="nucleotide sequence ID" value="NM_001376112.1"/>
</dbReference>
<dbReference type="RefSeq" id="NP_001363042.1">
    <property type="nucleotide sequence ID" value="NM_001376113.1"/>
</dbReference>
<dbReference type="RefSeq" id="NP_001363043.1">
    <property type="nucleotide sequence ID" value="NM_001376114.1"/>
</dbReference>
<dbReference type="RefSeq" id="NP_001363044.1">
    <property type="nucleotide sequence ID" value="NM_001376115.1"/>
</dbReference>
<dbReference type="RefSeq" id="NP_001363045.1">
    <property type="nucleotide sequence ID" value="NM_001376116.1"/>
</dbReference>
<dbReference type="RefSeq" id="NP_001363046.1">
    <property type="nucleotide sequence ID" value="NM_001376117.1"/>
</dbReference>
<dbReference type="RefSeq" id="NP_001363047.1">
    <property type="nucleotide sequence ID" value="NM_001376118.1"/>
</dbReference>
<dbReference type="RefSeq" id="NP_001363048.1">
    <property type="nucleotide sequence ID" value="NM_001376119.1"/>
</dbReference>
<dbReference type="RefSeq" id="NP_001363049.1">
    <property type="nucleotide sequence ID" value="NM_001376120.1"/>
</dbReference>
<dbReference type="RefSeq" id="NP_001363050.1">
    <property type="nucleotide sequence ID" value="NM_001376121.1"/>
</dbReference>
<dbReference type="RefSeq" id="NP_001363051.1">
    <property type="nucleotide sequence ID" value="NM_001376122.1"/>
</dbReference>
<dbReference type="RefSeq" id="NP_001363052.1">
    <property type="nucleotide sequence ID" value="NM_001376123.1"/>
</dbReference>
<dbReference type="RefSeq" id="NP_001363053.1">
    <property type="nucleotide sequence ID" value="NM_001376124.1"/>
</dbReference>
<dbReference type="RefSeq" id="NP_001363054.1">
    <property type="nucleotide sequence ID" value="NM_001376125.1"/>
</dbReference>
<dbReference type="RefSeq" id="NP_001363055.1">
    <property type="nucleotide sequence ID" value="NM_001376126.1"/>
</dbReference>
<dbReference type="RefSeq" id="NP_001363056.1">
    <property type="nucleotide sequence ID" value="NM_001376127.1"/>
</dbReference>
<dbReference type="RefSeq" id="NP_001363057.1">
    <property type="nucleotide sequence ID" value="NM_001376128.1"/>
</dbReference>
<dbReference type="RefSeq" id="NP_001363071.1">
    <property type="nucleotide sequence ID" value="NM_001376142.1"/>
</dbReference>
<dbReference type="RefSeq" id="NP_001363072.1">
    <property type="nucleotide sequence ID" value="NM_001376143.1"/>
</dbReference>
<dbReference type="RefSeq" id="NP_001363079.1">
    <property type="nucleotide sequence ID" value="NM_001376150.1"/>
</dbReference>
<dbReference type="RefSeq" id="NP_001363081.1">
    <property type="nucleotide sequence ID" value="NM_001376152.1"/>
</dbReference>
<dbReference type="RefSeq" id="NP_001363086.1">
    <property type="nucleotide sequence ID" value="NM_001376157.1"/>
</dbReference>
<dbReference type="RefSeq" id="NP_001363087.1">
    <property type="nucleotide sequence ID" value="NM_001376158.1"/>
</dbReference>
<dbReference type="RefSeq" id="NP_001363088.1">
    <property type="nucleotide sequence ID" value="NM_001376159.1"/>
</dbReference>
<dbReference type="RefSeq" id="NP_001363089.1">
    <property type="nucleotide sequence ID" value="NM_001376160.1"/>
</dbReference>
<dbReference type="RefSeq" id="NP_001363090.1">
    <property type="nucleotide sequence ID" value="NM_001376161.1"/>
</dbReference>
<dbReference type="RefSeq" id="NP_001363091.1">
    <property type="nucleotide sequence ID" value="NM_001376162.1"/>
</dbReference>
<dbReference type="RefSeq" id="NP_001363092.1">
    <property type="nucleotide sequence ID" value="NM_001376163.1"/>
</dbReference>
<dbReference type="RefSeq" id="NP_001363093.1">
    <property type="nucleotide sequence ID" value="NM_001376164.1"/>
</dbReference>
<dbReference type="RefSeq" id="NP_001363094.1">
    <property type="nucleotide sequence ID" value="NM_001376165.1"/>
</dbReference>
<dbReference type="RefSeq" id="NP_001363095.1">
    <property type="nucleotide sequence ID" value="NM_001376166.1"/>
</dbReference>
<dbReference type="RefSeq" id="NP_001363096.1">
    <property type="nucleotide sequence ID" value="NM_001376167.1"/>
</dbReference>
<dbReference type="RefSeq" id="NP_001363097.1">
    <property type="nucleotide sequence ID" value="NM_001376168.1"/>
</dbReference>
<dbReference type="RefSeq" id="NP_001363098.1">
    <property type="nucleotide sequence ID" value="NM_001376169.1"/>
</dbReference>
<dbReference type="RefSeq" id="NP_001363099.1">
    <property type="nucleotide sequence ID" value="NM_001376170.1"/>
</dbReference>
<dbReference type="RefSeq" id="NP_001363100.1">
    <property type="nucleotide sequence ID" value="NM_001376171.1"/>
</dbReference>
<dbReference type="RefSeq" id="NP_001363101.1">
    <property type="nucleotide sequence ID" value="NM_001376172.1"/>
</dbReference>
<dbReference type="RefSeq" id="NP_001363102.1">
    <property type="nucleotide sequence ID" value="NM_001376173.1"/>
</dbReference>
<dbReference type="RefSeq" id="NP_001363103.1">
    <property type="nucleotide sequence ID" value="NM_001376174.1"/>
</dbReference>
<dbReference type="RefSeq" id="NP_001363104.1">
    <property type="nucleotide sequence ID" value="NM_001376175.1"/>
</dbReference>
<dbReference type="RefSeq" id="NP_001363105.1">
    <property type="nucleotide sequence ID" value="NM_001376176.1"/>
</dbReference>
<dbReference type="RefSeq" id="NP_001363106.1">
    <property type="nucleotide sequence ID" value="NM_001376177.1"/>
</dbReference>
<dbReference type="RefSeq" id="NP_001363107.1">
    <property type="nucleotide sequence ID" value="NM_001376178.1"/>
</dbReference>
<dbReference type="RefSeq" id="NP_001363108.1">
    <property type="nucleotide sequence ID" value="NM_001376179.1"/>
</dbReference>
<dbReference type="RefSeq" id="NP_001363109.1">
    <property type="nucleotide sequence ID" value="NM_001376180.1"/>
</dbReference>
<dbReference type="RefSeq" id="NP_001363110.1">
    <property type="nucleotide sequence ID" value="NM_001376181.1"/>
</dbReference>
<dbReference type="RefSeq" id="NP_001363111.1">
    <property type="nucleotide sequence ID" value="NM_001376182.1"/>
</dbReference>
<dbReference type="RefSeq" id="NP_001363112.1">
    <property type="nucleotide sequence ID" value="NM_001376183.1"/>
</dbReference>
<dbReference type="RefSeq" id="NP_001363113.1">
    <property type="nucleotide sequence ID" value="NM_001376184.1"/>
</dbReference>
<dbReference type="RefSeq" id="NP_001363114.1">
    <property type="nucleotide sequence ID" value="NM_001376185.1"/>
</dbReference>
<dbReference type="RefSeq" id="NP_001363115.1">
    <property type="nucleotide sequence ID" value="NM_001376186.1"/>
</dbReference>
<dbReference type="RefSeq" id="NP_001363116.1">
    <property type="nucleotide sequence ID" value="NM_001376187.1"/>
</dbReference>
<dbReference type="RefSeq" id="NP_001363117.1">
    <property type="nucleotide sequence ID" value="NM_001376188.1"/>
</dbReference>
<dbReference type="RefSeq" id="NP_001363118.1">
    <property type="nucleotide sequence ID" value="NM_001376189.1"/>
</dbReference>
<dbReference type="RefSeq" id="NP_001363119.1">
    <property type="nucleotide sequence ID" value="NM_001376190.1"/>
</dbReference>
<dbReference type="RefSeq" id="NP_001374870.1">
    <property type="nucleotide sequence ID" value="NM_001387941.1"/>
</dbReference>
<dbReference type="RefSeq" id="NP_001374874.1">
    <property type="nucleotide sequence ID" value="NM_001387945.1"/>
</dbReference>
<dbReference type="RefSeq" id="NP_001374876.1">
    <property type="nucleotide sequence ID" value="NM_001387947.1"/>
</dbReference>
<dbReference type="RefSeq" id="NP_001374877.1">
    <property type="nucleotide sequence ID" value="NM_001387948.1"/>
</dbReference>
<dbReference type="RefSeq" id="NP_001374879.1">
    <property type="nucleotide sequence ID" value="NM_001387950.1"/>
</dbReference>
<dbReference type="RefSeq" id="NP_001374881.1">
    <property type="nucleotide sequence ID" value="NM_001387952.1"/>
</dbReference>
<dbReference type="RefSeq" id="NP_001374882.1">
    <property type="nucleotide sequence ID" value="NM_001387953.1"/>
</dbReference>
<dbReference type="RefSeq" id="NP_001374886.1">
    <property type="nucleotide sequence ID" value="NM_001387957.1"/>
</dbReference>
<dbReference type="RefSeq" id="NP_001374888.1">
    <property type="nucleotide sequence ID" value="NM_001387959.1"/>
</dbReference>
<dbReference type="RefSeq" id="NP_001374889.1">
    <property type="nucleotide sequence ID" value="NM_001387960.1"/>
</dbReference>
<dbReference type="RefSeq" id="NP_001374891.1">
    <property type="nucleotide sequence ID" value="NM_001387962.1"/>
</dbReference>
<dbReference type="RefSeq" id="NP_001374895.1">
    <property type="nucleotide sequence ID" value="NM_001387966.1"/>
</dbReference>
<dbReference type="RefSeq" id="NP_001374896.1">
    <property type="nucleotide sequence ID" value="NM_001387967.1"/>
</dbReference>
<dbReference type="RefSeq" id="NP_001374897.1">
    <property type="nucleotide sequence ID" value="NM_001387968.1"/>
</dbReference>
<dbReference type="RefSeq" id="NP_001374898.1">
    <property type="nucleotide sequence ID" value="NM_001387969.1"/>
</dbReference>
<dbReference type="RefSeq" id="NP_001374899.1">
    <property type="nucleotide sequence ID" value="NM_001387970.1"/>
</dbReference>
<dbReference type="RefSeq" id="NP_001374900.1">
    <property type="nucleotide sequence ID" value="NM_001387971.1"/>
</dbReference>
<dbReference type="RefSeq" id="NP_001374901.1">
    <property type="nucleotide sequence ID" value="NM_001387972.1"/>
</dbReference>
<dbReference type="RefSeq" id="NP_001374902.1">
    <property type="nucleotide sequence ID" value="NM_001387973.1"/>
</dbReference>
<dbReference type="RefSeq" id="NP_001374903.1">
    <property type="nucleotide sequence ID" value="NM_001387974.1"/>
</dbReference>
<dbReference type="RefSeq" id="NP_001374904.1">
    <property type="nucleotide sequence ID" value="NM_001387975.1"/>
</dbReference>
<dbReference type="RefSeq" id="NP_001374905.1">
    <property type="nucleotide sequence ID" value="NM_001387976.1"/>
</dbReference>
<dbReference type="RefSeq" id="NP_001374906.1">
    <property type="nucleotide sequence ID" value="NM_001387977.1"/>
</dbReference>
<dbReference type="RefSeq" id="NP_001374907.1">
    <property type="nucleotide sequence ID" value="NM_001387978.1"/>
</dbReference>
<dbReference type="RefSeq" id="NP_001374908.1">
    <property type="nucleotide sequence ID" value="NM_001387979.1"/>
</dbReference>
<dbReference type="RefSeq" id="NP_001374909.1">
    <property type="nucleotide sequence ID" value="NM_001387980.1"/>
</dbReference>
<dbReference type="RefSeq" id="NP_001374910.1">
    <property type="nucleotide sequence ID" value="NM_001387981.1"/>
</dbReference>
<dbReference type="RefSeq" id="XP_005247314.1">
    <property type="nucleotide sequence ID" value="XM_005247257.1"/>
</dbReference>
<dbReference type="RefSeq" id="XP_005247315.1">
    <property type="nucleotide sequence ID" value="XM_005247258.1"/>
</dbReference>
<dbReference type="RefSeq" id="XP_005247318.1">
    <property type="nucleotide sequence ID" value="XM_005247261.3"/>
</dbReference>
<dbReference type="RefSeq" id="XP_011510913.1">
    <property type="nucleotide sequence ID" value="XM_011512611.1"/>
</dbReference>
<dbReference type="RefSeq" id="XP_016861541.1">
    <property type="nucleotide sequence ID" value="XM_017006052.1"/>
</dbReference>
<dbReference type="RefSeq" id="XP_016861542.1">
    <property type="nucleotide sequence ID" value="XM_017006053.1"/>
</dbReference>
<dbReference type="RefSeq" id="XP_016861543.1">
    <property type="nucleotide sequence ID" value="XM_017006054.1"/>
</dbReference>
<dbReference type="RefSeq" id="XP_016861544.1">
    <property type="nucleotide sequence ID" value="XM_017006055.1"/>
</dbReference>
<dbReference type="RefSeq" id="XP_016861545.1">
    <property type="nucleotide sequence ID" value="XM_017006056.1"/>
</dbReference>
<dbReference type="RefSeq" id="XP_016861546.1">
    <property type="nucleotide sequence ID" value="XM_017006057.1"/>
</dbReference>
<dbReference type="RefSeq" id="XP_016861547.1">
    <property type="nucleotide sequence ID" value="XM_017006058.1"/>
</dbReference>
<dbReference type="RefSeq" id="XP_016861548.1">
    <property type="nucleotide sequence ID" value="XM_017006059.1"/>
</dbReference>
<dbReference type="RefSeq" id="XP_016861549.1">
    <property type="nucleotide sequence ID" value="XM_017006060.1"/>
</dbReference>
<dbReference type="RefSeq" id="XP_016861550.1">
    <property type="nucleotide sequence ID" value="XM_017006061.1"/>
</dbReference>
<dbReference type="RefSeq" id="XP_047303811.1">
    <property type="nucleotide sequence ID" value="XM_047447855.1"/>
</dbReference>
<dbReference type="RefSeq" id="XP_047303812.1">
    <property type="nucleotide sequence ID" value="XM_047447856.1"/>
</dbReference>
<dbReference type="RefSeq" id="XP_047303813.1">
    <property type="nucleotide sequence ID" value="XM_047447857.1"/>
</dbReference>
<dbReference type="RefSeq" id="XP_047303814.1">
    <property type="nucleotide sequence ID" value="XM_047447858.1"/>
</dbReference>
<dbReference type="RefSeq" id="XP_047303815.1">
    <property type="nucleotide sequence ID" value="XM_047447859.1"/>
</dbReference>
<dbReference type="RefSeq" id="XP_047303816.1">
    <property type="nucleotide sequence ID" value="XM_047447860.1"/>
</dbReference>
<dbReference type="RefSeq" id="XP_047303817.1">
    <property type="nucleotide sequence ID" value="XM_047447861.1"/>
</dbReference>
<dbReference type="RefSeq" id="XP_047303818.1">
    <property type="nucleotide sequence ID" value="XM_047447862.1"/>
</dbReference>
<dbReference type="RefSeq" id="XP_047303819.1">
    <property type="nucleotide sequence ID" value="XM_047447863.1"/>
</dbReference>
<dbReference type="RefSeq" id="XP_047303820.1">
    <property type="nucleotide sequence ID" value="XM_047447864.1"/>
</dbReference>
<dbReference type="RefSeq" id="XP_047303821.1">
    <property type="nucleotide sequence ID" value="XM_047447865.1"/>
</dbReference>
<dbReference type="RefSeq" id="XP_047303822.1">
    <property type="nucleotide sequence ID" value="XM_047447866.1"/>
</dbReference>
<dbReference type="RefSeq" id="XP_047303823.1">
    <property type="nucleotide sequence ID" value="XM_047447867.1"/>
</dbReference>
<dbReference type="RefSeq" id="XP_047303824.1">
    <property type="nucleotide sequence ID" value="XM_047447868.1"/>
</dbReference>
<dbReference type="RefSeq" id="XP_047303825.1">
    <property type="nucleotide sequence ID" value="XM_047447869.1"/>
</dbReference>
<dbReference type="RefSeq" id="XP_047303826.1">
    <property type="nucleotide sequence ID" value="XM_047447870.1"/>
</dbReference>
<dbReference type="RefSeq" id="XP_047303827.1">
    <property type="nucleotide sequence ID" value="XM_047447871.1"/>
</dbReference>
<dbReference type="PDB" id="6E93">
    <property type="method" value="X-ray"/>
    <property type="resolution" value="1.75 A"/>
    <property type="chains" value="A=1006-1124"/>
</dbReference>
<dbReference type="PDB" id="6E94">
    <property type="method" value="X-ray"/>
    <property type="resolution" value="1.59 A"/>
    <property type="chains" value="A=1006-1124"/>
</dbReference>
<dbReference type="PDBsum" id="6E93"/>
<dbReference type="PDBsum" id="6E94"/>
<dbReference type="SASBDB" id="Q8NAP3"/>
<dbReference type="SMR" id="Q8NAP3"/>
<dbReference type="BioGRID" id="128969">
    <property type="interactions" value="147"/>
</dbReference>
<dbReference type="FunCoup" id="Q8NAP3">
    <property type="interactions" value="1136"/>
</dbReference>
<dbReference type="IntAct" id="Q8NAP3">
    <property type="interactions" value="35"/>
</dbReference>
<dbReference type="MINT" id="Q8NAP3"/>
<dbReference type="STRING" id="9606.ENSP00000426387"/>
<dbReference type="GlyGen" id="Q8NAP3">
    <property type="glycosylation" value="1 site, 1 O-linked glycan (1 site)"/>
</dbReference>
<dbReference type="iPTMnet" id="Q8NAP3"/>
<dbReference type="PhosphoSitePlus" id="Q8NAP3"/>
<dbReference type="BioMuta" id="ZBTB38"/>
<dbReference type="DMDM" id="68566212"/>
<dbReference type="jPOST" id="Q8NAP3"/>
<dbReference type="MassIVE" id="Q8NAP3"/>
<dbReference type="PaxDb" id="9606-ENSP00000426387"/>
<dbReference type="PeptideAtlas" id="Q8NAP3"/>
<dbReference type="ProteomicsDB" id="72688"/>
<dbReference type="Pumba" id="Q8NAP3"/>
<dbReference type="Antibodypedia" id="8856">
    <property type="antibodies" value="180 antibodies from 29 providers"/>
</dbReference>
<dbReference type="DNASU" id="253461"/>
<dbReference type="Ensembl" id="ENST00000321464.7">
    <property type="protein sequence ID" value="ENSP00000372635.5"/>
    <property type="gene ID" value="ENSG00000177311.12"/>
</dbReference>
<dbReference type="Ensembl" id="ENST00000441582.2">
    <property type="protein sequence ID" value="ENSP00000406955.2"/>
    <property type="gene ID" value="ENSG00000177311.12"/>
</dbReference>
<dbReference type="Ensembl" id="ENST00000514251.5">
    <property type="protein sequence ID" value="ENSP00000426387.1"/>
    <property type="gene ID" value="ENSG00000177311.12"/>
</dbReference>
<dbReference type="Ensembl" id="ENST00000637056.1">
    <property type="protein sequence ID" value="ENSP00000490041.1"/>
    <property type="gene ID" value="ENSG00000177311.12"/>
</dbReference>
<dbReference type="GeneID" id="253461"/>
<dbReference type="KEGG" id="hsa:253461"/>
<dbReference type="MANE-Select" id="ENST00000321464.7">
    <property type="protein sequence ID" value="ENSP00000372635.5"/>
    <property type="RefSeq nucleotide sequence ID" value="NM_001376113.1"/>
    <property type="RefSeq protein sequence ID" value="NP_001363042.1"/>
</dbReference>
<dbReference type="UCSC" id="uc062olr.1">
    <property type="organism name" value="human"/>
</dbReference>
<dbReference type="AGR" id="HGNC:26636"/>
<dbReference type="CTD" id="253461"/>
<dbReference type="DisGeNET" id="253461"/>
<dbReference type="GeneCards" id="ZBTB38"/>
<dbReference type="HGNC" id="HGNC:26636">
    <property type="gene designation" value="ZBTB38"/>
</dbReference>
<dbReference type="HPA" id="ENSG00000177311">
    <property type="expression patterns" value="Low tissue specificity"/>
</dbReference>
<dbReference type="MIM" id="612218">
    <property type="type" value="gene"/>
</dbReference>
<dbReference type="MIM" id="612221">
    <property type="type" value="phenotype"/>
</dbReference>
<dbReference type="neXtProt" id="NX_Q8NAP3"/>
<dbReference type="OpenTargets" id="ENSG00000177311"/>
<dbReference type="PharmGKB" id="PA142670542"/>
<dbReference type="VEuPathDB" id="HostDB:ENSG00000177311"/>
<dbReference type="eggNOG" id="KOG1721">
    <property type="taxonomic scope" value="Eukaryota"/>
</dbReference>
<dbReference type="GeneTree" id="ENSGT00940000161449"/>
<dbReference type="InParanoid" id="Q8NAP3"/>
<dbReference type="OMA" id="SECVEMN"/>
<dbReference type="OrthoDB" id="8922241at2759"/>
<dbReference type="PAN-GO" id="Q8NAP3">
    <property type="GO annotations" value="3 GO annotations based on evolutionary models"/>
</dbReference>
<dbReference type="PhylomeDB" id="Q8NAP3"/>
<dbReference type="TreeFam" id="TF333100"/>
<dbReference type="PathwayCommons" id="Q8NAP3"/>
<dbReference type="SignaLink" id="Q8NAP3"/>
<dbReference type="BioGRID-ORCS" id="253461">
    <property type="hits" value="13 hits in 1215 CRISPR screens"/>
</dbReference>
<dbReference type="ChiTaRS" id="ZBTB38">
    <property type="organism name" value="human"/>
</dbReference>
<dbReference type="GenomeRNAi" id="253461"/>
<dbReference type="Pharos" id="Q8NAP3">
    <property type="development level" value="Tbio"/>
</dbReference>
<dbReference type="PRO" id="PR:Q8NAP3"/>
<dbReference type="Proteomes" id="UP000005640">
    <property type="component" value="Chromosome 3"/>
</dbReference>
<dbReference type="RNAct" id="Q8NAP3">
    <property type="molecule type" value="protein"/>
</dbReference>
<dbReference type="Bgee" id="ENSG00000177311">
    <property type="expression patterns" value="Expressed in superficial temporal artery and 210 other cell types or tissues"/>
</dbReference>
<dbReference type="ExpressionAtlas" id="Q8NAP3">
    <property type="expression patterns" value="baseline and differential"/>
</dbReference>
<dbReference type="GO" id="GO:0072562">
    <property type="term" value="C:blood microparticle"/>
    <property type="evidence" value="ECO:0007005"/>
    <property type="project" value="UniProtKB"/>
</dbReference>
<dbReference type="GO" id="GO:0005694">
    <property type="term" value="C:chromosome"/>
    <property type="evidence" value="ECO:0007669"/>
    <property type="project" value="UniProtKB-SubCell"/>
</dbReference>
<dbReference type="GO" id="GO:0005654">
    <property type="term" value="C:nucleoplasm"/>
    <property type="evidence" value="ECO:0000314"/>
    <property type="project" value="HPA"/>
</dbReference>
<dbReference type="GO" id="GO:0005634">
    <property type="term" value="C:nucleus"/>
    <property type="evidence" value="ECO:0000314"/>
    <property type="project" value="UniProtKB"/>
</dbReference>
<dbReference type="GO" id="GO:0003700">
    <property type="term" value="F:DNA-binding transcription factor activity"/>
    <property type="evidence" value="ECO:0000250"/>
    <property type="project" value="UniProtKB"/>
</dbReference>
<dbReference type="GO" id="GO:0000981">
    <property type="term" value="F:DNA-binding transcription factor activity, RNA polymerase II-specific"/>
    <property type="evidence" value="ECO:0000318"/>
    <property type="project" value="GO_Central"/>
</dbReference>
<dbReference type="GO" id="GO:0008327">
    <property type="term" value="F:methyl-CpG binding"/>
    <property type="evidence" value="ECO:0000314"/>
    <property type="project" value="UniProtKB"/>
</dbReference>
<dbReference type="GO" id="GO:0042803">
    <property type="term" value="F:protein homodimerization activity"/>
    <property type="evidence" value="ECO:0000314"/>
    <property type="project" value="UniProtKB"/>
</dbReference>
<dbReference type="GO" id="GO:0000978">
    <property type="term" value="F:RNA polymerase II cis-regulatory region sequence-specific DNA binding"/>
    <property type="evidence" value="ECO:0000318"/>
    <property type="project" value="GO_Central"/>
</dbReference>
<dbReference type="GO" id="GO:0008270">
    <property type="term" value="F:zinc ion binding"/>
    <property type="evidence" value="ECO:0007669"/>
    <property type="project" value="UniProtKB-KW"/>
</dbReference>
<dbReference type="GO" id="GO:0006974">
    <property type="term" value="P:DNA damage response"/>
    <property type="evidence" value="ECO:0000315"/>
    <property type="project" value="UniProtKB"/>
</dbReference>
<dbReference type="GO" id="GO:0045892">
    <property type="term" value="P:negative regulation of DNA-templated transcription"/>
    <property type="evidence" value="ECO:0000314"/>
    <property type="project" value="UniProtKB"/>
</dbReference>
<dbReference type="GO" id="GO:0045944">
    <property type="term" value="P:positive regulation of transcription by RNA polymerase II"/>
    <property type="evidence" value="ECO:0000250"/>
    <property type="project" value="UniProtKB"/>
</dbReference>
<dbReference type="GO" id="GO:0006275">
    <property type="term" value="P:regulation of DNA replication"/>
    <property type="evidence" value="ECO:0000315"/>
    <property type="project" value="UniProtKB"/>
</dbReference>
<dbReference type="GO" id="GO:0006355">
    <property type="term" value="P:regulation of DNA-templated transcription"/>
    <property type="evidence" value="ECO:0000318"/>
    <property type="project" value="GO_Central"/>
</dbReference>
<dbReference type="CDD" id="cd18223">
    <property type="entry name" value="BTB_POZ_ZBTB38_CIBZ"/>
    <property type="match status" value="1"/>
</dbReference>
<dbReference type="FunFam" id="3.30.160.60:FF:000325">
    <property type="entry name" value="ZFP90 zinc finger protein"/>
    <property type="match status" value="1"/>
</dbReference>
<dbReference type="FunFam" id="3.30.160.60:FF:000235">
    <property type="entry name" value="Zinc finger and BTB domain containing 38"/>
    <property type="match status" value="1"/>
</dbReference>
<dbReference type="FunFam" id="3.30.160.60:FF:000437">
    <property type="entry name" value="zinc finger and BTB domain-containing protein 38"/>
    <property type="match status" value="1"/>
</dbReference>
<dbReference type="FunFam" id="3.30.160.60:FF:001058">
    <property type="entry name" value="zinc finger and BTB domain-containing protein 38"/>
    <property type="match status" value="1"/>
</dbReference>
<dbReference type="FunFam" id="3.30.160.60:FF:001251">
    <property type="entry name" value="zinc finger and BTB domain-containing protein 38"/>
    <property type="match status" value="1"/>
</dbReference>
<dbReference type="FunFam" id="3.30.160.60:FF:001331">
    <property type="entry name" value="zinc finger and BTB domain-containing protein 38"/>
    <property type="match status" value="1"/>
</dbReference>
<dbReference type="FunFam" id="3.30.160.60:FF:001428">
    <property type="entry name" value="zinc finger and BTB domain-containing protein 38"/>
    <property type="match status" value="1"/>
</dbReference>
<dbReference type="FunFam" id="3.30.160.60:FF:001474">
    <property type="entry name" value="zinc finger and BTB domain-containing protein 38"/>
    <property type="match status" value="1"/>
</dbReference>
<dbReference type="FunFam" id="3.30.710.10:FF:000081">
    <property type="entry name" value="zinc finger and BTB domain-containing protein 38"/>
    <property type="match status" value="1"/>
</dbReference>
<dbReference type="Gene3D" id="3.30.160.60">
    <property type="entry name" value="Classic Zinc Finger"/>
    <property type="match status" value="8"/>
</dbReference>
<dbReference type="Gene3D" id="3.30.710.10">
    <property type="entry name" value="Potassium Channel Kv1.1, Chain A"/>
    <property type="match status" value="1"/>
</dbReference>
<dbReference type="InterPro" id="IPR000210">
    <property type="entry name" value="BTB/POZ_dom"/>
</dbReference>
<dbReference type="InterPro" id="IPR011333">
    <property type="entry name" value="SKP1/BTB/POZ_sf"/>
</dbReference>
<dbReference type="InterPro" id="IPR036236">
    <property type="entry name" value="Znf_C2H2_sf"/>
</dbReference>
<dbReference type="InterPro" id="IPR013087">
    <property type="entry name" value="Znf_C2H2_type"/>
</dbReference>
<dbReference type="PANTHER" id="PTHR24394:SF58">
    <property type="entry name" value="ZINC FINGER AND BTB DOMAIN CONTAINING 33"/>
    <property type="match status" value="1"/>
</dbReference>
<dbReference type="PANTHER" id="PTHR24394">
    <property type="entry name" value="ZINC FINGER PROTEIN"/>
    <property type="match status" value="1"/>
</dbReference>
<dbReference type="Pfam" id="PF00651">
    <property type="entry name" value="BTB"/>
    <property type="match status" value="1"/>
</dbReference>
<dbReference type="Pfam" id="PF00096">
    <property type="entry name" value="zf-C2H2"/>
    <property type="match status" value="3"/>
</dbReference>
<dbReference type="SMART" id="SM00225">
    <property type="entry name" value="BTB"/>
    <property type="match status" value="1"/>
</dbReference>
<dbReference type="SMART" id="SM00355">
    <property type="entry name" value="ZnF_C2H2"/>
    <property type="match status" value="10"/>
</dbReference>
<dbReference type="SUPFAM" id="SSF57667">
    <property type="entry name" value="beta-beta-alpha zinc fingers"/>
    <property type="match status" value="4"/>
</dbReference>
<dbReference type="SUPFAM" id="SSF54695">
    <property type="entry name" value="POZ domain"/>
    <property type="match status" value="1"/>
</dbReference>
<dbReference type="PROSITE" id="PS50097">
    <property type="entry name" value="BTB"/>
    <property type="match status" value="1"/>
</dbReference>
<dbReference type="PROSITE" id="PS00028">
    <property type="entry name" value="ZINC_FINGER_C2H2_1"/>
    <property type="match status" value="9"/>
</dbReference>
<dbReference type="PROSITE" id="PS50157">
    <property type="entry name" value="ZINC_FINGER_C2H2_2"/>
    <property type="match status" value="9"/>
</dbReference>
<accession>Q8NAP3</accession>
<accession>D3DNF6</accession>
<gene>
    <name evidence="12" type="primary">ZBTB38</name>
</gene>
<name>ZBT38_HUMAN</name>
<protein>
    <recommendedName>
        <fullName>Zinc finger and BTB domain-containing protein 38</fullName>
    </recommendedName>
</protein>
<sequence length="1195" mass="134257">MTVMSLSRDLKDDFHSDTVLSILNEQRIRGILCDVTIIVEDTKFKAHSNVLAASSLYFKNIFWSHTICISSHVLELDDLKAEVFTEILNYIYSSTVVVKRQETVTDLAAAGKKLGISFLEDLTDRNFSNSPGPYVFCITEKGVVKEEKNEKRHEEPAITNGPRITNAFSIIETENSNNMFSPLDLRASFKKVSDSMRTASLCLERTDVCHEAEPVRTLAEHSYAVSSVAEAYRSQPVREHDGSSPGNTGKENCEALAAKPKTCRKPKTFSIPQDSDSATENIPPPPVSNLEVNQERSPQPAAVLTRSKSPNNEGDVHFSREDENQSSDVPGPPAAEVPPLVYNCSCCSKAFDSSTLLSAHMQLHKPTQEPLVCKYCNKQFTTLNRLDRHEQICMRSSHMPIPGGNQRFLENYPTIGQNGGSFTGPEPLLSENRIGEFSSTGSTLPDTDHMVKFVNGQMLYSCVVCKRSYVTLSSLRRHANVHSWRRTYPCHYCNKVFALAEYRTRHEIWHTGERRYQCIFCLETFMTYYILKNHQKSFHAIDHRLSISKKTANGGLKPSVYPYKLYRLLPMKCKRAPYKSYRNSSYENARENSQMNESAPGTYVVQNPHSSELPTLNFQDTVNTLTNSPAIPLETSACQDIPTSANVQNAEGTKWGEEALKMDLDNNFYSTEVSVSSTENAVSSDLRAGDVPVLSLSNSSENAASVISYSGSAPSVIVHSSQFSSVIMHSNAIAAMTSSNHRAFSDPAVSQSLKDDSKPEPDKVGRFASRPKSIKEKKKTTSHTRGEIPEESNYVADPGGSLSKTTNIAEETSKIETYIAKPALPGTSTNSNVAPLCQITVKIGNEAIVKRHILGSKLFYKRGRRPKYQMQEEPLPQGNDPEPSGDSPLGLCQSECMEMSEVFDDASDQDSTDKPWRPYYNYKPKKKSRQLKKMRKVNWRKEHGNRSPSHKCKYPAELDCAVGKAPQDKPFEEEETKEMPKLQCELCDGDKAVGAGNQGRPHRHLTSRPYACELCAKQFQSPSTLKMHMRCHTGEKPYQCKTCGRCFSVQGNLQKHERIHLGLKEFVCQYCNKAFTLNETLKIHERIHTGEKRYHCQFCFQRFLYLSTKRNHEQRHIREHNGKGYACFQCPKICKTAAALGMHQKKHLFKSPSQQEKIGDVCHENSNPLENQHFIGSEDNDQKDNIQTGVENVVL</sequence>
<comment type="function">
    <text evidence="1 5 8">Transcriptional regulator with bimodal DNA-binding specificity. Binds with a higher affinity to methylated CpG dinucleotides in the consensus sequence 5'-CGCG-3' but can also bind to E-box elements (5'-CACGTG-3'). Can also bind specifically to a single methyl-CpG pair. Represses transcription in a methyl-CpG-dependent manner (PubMed:16354688). Plays an important role in regulating DNA replication and common fragile sites (CFS) stability in a RBBP6- and MCM10-dependent manner; represses expression of MCM10 which plays an important role in DNA-replication (PubMed:24726359). Acts as a transcriptional activator. May be involved in the differentiation and/or survival of late postmitotic neurons (By similarity).</text>
</comment>
<comment type="subunit">
    <text evidence="5 7 8">Interacts with CBFA2T3. Interacts with ZBTB4. Interacts with RBBP6.</text>
</comment>
<comment type="interaction">
    <interactant intactId="EBI-5235984">
        <id>Q8NAP3</id>
    </interactant>
    <interactant intactId="EBI-745541">
        <id>Q8N187</id>
        <label>CARF</label>
    </interactant>
    <organismsDiffer>false</organismsDiffer>
    <experiments>3</experiments>
</comment>
<comment type="interaction">
    <interactant intactId="EBI-5235984">
        <id>Q8NAP3</id>
    </interactant>
    <interactant intactId="EBI-10968534">
        <id>P50570-2</id>
        <label>DNM2</label>
    </interactant>
    <organismsDiffer>false</organismsDiffer>
    <experiments>3</experiments>
</comment>
<comment type="interaction">
    <interactant intactId="EBI-5235984">
        <id>Q8NAP3</id>
    </interactant>
    <interactant intactId="EBI-1802965">
        <id>Q96EB6</id>
        <label>SIRT1</label>
    </interactant>
    <organismsDiffer>false</organismsDiffer>
    <experiments>3</experiments>
</comment>
<comment type="interaction">
    <interactant intactId="EBI-5235984">
        <id>Q8NAP3</id>
    </interactant>
    <interactant intactId="EBI-2800203">
        <id>O14773</id>
        <label>TPP1</label>
    </interactant>
    <organismsDiffer>false</organismsDiffer>
    <experiments>3</experiments>
</comment>
<comment type="subcellular location">
    <subcellularLocation>
        <location evidence="5">Nucleus</location>
    </subcellularLocation>
    <subcellularLocation>
        <location evidence="5">Chromosome</location>
    </subcellularLocation>
    <text evidence="5">Localizes to chromocenters.</text>
</comment>
<comment type="domain">
    <text evidence="1">The BTB domain is not required for activation of transcription or self-association.</text>
</comment>
<comment type="PTM">
    <text evidence="8">Ubiquitinated by RBBP6; leading to its degradation by the proteasome.</text>
</comment>
<comment type="polymorphism">
    <text evidence="6">Genetic variations in ZBTB38 define the stature quantitative trait locus 10 (STQTL10) [MIM:612221]. Adult height is an easily observable and highly heritable complex continuous trait. Because of this, it is a model trait for studying genetic influence on quantitative traits.</text>
</comment>
<comment type="sequence caution" evidence="10">
    <conflict type="frameshift">
        <sequence resource="EMBL-CDS" id="BAC03868"/>
    </conflict>
</comment>
<organism>
    <name type="scientific">Homo sapiens</name>
    <name type="common">Human</name>
    <dbReference type="NCBI Taxonomy" id="9606"/>
    <lineage>
        <taxon>Eukaryota</taxon>
        <taxon>Metazoa</taxon>
        <taxon>Chordata</taxon>
        <taxon>Craniata</taxon>
        <taxon>Vertebrata</taxon>
        <taxon>Euteleostomi</taxon>
        <taxon>Mammalia</taxon>
        <taxon>Eutheria</taxon>
        <taxon>Euarchontoglires</taxon>
        <taxon>Primates</taxon>
        <taxon>Haplorrhini</taxon>
        <taxon>Catarrhini</taxon>
        <taxon>Hominidae</taxon>
        <taxon>Homo</taxon>
    </lineage>
</organism>
<feature type="chain" id="PRO_0000047742" description="Zinc finger and BTB domain-containing protein 38">
    <location>
        <begin position="1"/>
        <end position="1195"/>
    </location>
</feature>
<feature type="domain" description="BTB" evidence="2">
    <location>
        <begin position="33"/>
        <end position="100"/>
    </location>
</feature>
<feature type="zinc finger region" description="C2H2-type 1" evidence="3">
    <location>
        <begin position="342"/>
        <end position="364"/>
    </location>
</feature>
<feature type="zinc finger region" description="C2H2-type 2; degenerate" evidence="3">
    <location>
        <begin position="371"/>
        <end position="395"/>
    </location>
</feature>
<feature type="zinc finger region" description="C2H2-type 3" evidence="3">
    <location>
        <begin position="460"/>
        <end position="482"/>
    </location>
</feature>
<feature type="zinc finger region" description="C2H2-type 4" evidence="3">
    <location>
        <begin position="488"/>
        <end position="510"/>
    </location>
</feature>
<feature type="zinc finger region" description="C2H2-type 5" evidence="3">
    <location>
        <begin position="516"/>
        <end position="539"/>
    </location>
</feature>
<feature type="zinc finger region" description="C2H2-type 6" evidence="3">
    <location>
        <begin position="1010"/>
        <end position="1032"/>
    </location>
</feature>
<feature type="zinc finger region" description="C2H2-type 7" evidence="3">
    <location>
        <begin position="1038"/>
        <end position="1060"/>
    </location>
</feature>
<feature type="zinc finger region" description="C2H2-type 8" evidence="3">
    <location>
        <begin position="1066"/>
        <end position="1088"/>
    </location>
</feature>
<feature type="zinc finger region" description="C2H2-type 9" evidence="3">
    <location>
        <begin position="1094"/>
        <end position="1116"/>
    </location>
</feature>
<feature type="zinc finger region" description="C2H2-type 10" evidence="3">
    <location>
        <begin position="1125"/>
        <end position="1147"/>
    </location>
</feature>
<feature type="region of interest" description="Disordered" evidence="4">
    <location>
        <begin position="264"/>
        <end position="334"/>
    </location>
</feature>
<feature type="region of interest" description="Interaction with CBFA2T3" evidence="7">
    <location>
        <begin position="300"/>
        <end position="523"/>
    </location>
</feature>
<feature type="region of interest" description="Disordered" evidence="4">
    <location>
        <begin position="745"/>
        <end position="804"/>
    </location>
</feature>
<feature type="region of interest" description="Disordered" evidence="4">
    <location>
        <begin position="871"/>
        <end position="891"/>
    </location>
</feature>
<feature type="region of interest" description="Disordered" evidence="4">
    <location>
        <begin position="903"/>
        <end position="922"/>
    </location>
</feature>
<feature type="compositionally biased region" description="Polar residues" evidence="4">
    <location>
        <begin position="270"/>
        <end position="280"/>
    </location>
</feature>
<feature type="compositionally biased region" description="Basic and acidic residues" evidence="4">
    <location>
        <begin position="314"/>
        <end position="323"/>
    </location>
</feature>
<feature type="compositionally biased region" description="Basic and acidic residues" evidence="4">
    <location>
        <begin position="753"/>
        <end position="765"/>
    </location>
</feature>
<feature type="modified residue" description="Phosphoserine" evidence="14">
    <location>
        <position position="130"/>
    </location>
</feature>
<feature type="modified residue" description="Phosphoserine" evidence="13">
    <location>
        <position position="309"/>
    </location>
</feature>
<feature type="cross-link" description="Glycyl lysine isopeptide (Lys-Gly) (interchain with G-Cter in SUMO2)" evidence="15 16 17 18">
    <location>
        <position position="43"/>
    </location>
</feature>
<feature type="cross-link" description="Glycyl lysine isopeptide (Lys-Gly) (interchain with G-Cter in SUMO2)" evidence="15 16 17">
    <location>
        <position position="145"/>
    </location>
</feature>
<feature type="cross-link" description="Glycyl lysine isopeptide (Lys-Gly) (interchain with G-Cter in SUMO2)" evidence="18">
    <location>
        <position position="148"/>
    </location>
</feature>
<feature type="cross-link" description="Glycyl lysine isopeptide (Lys-Gly) (interchain with G-Cter in SUMO2)" evidence="18">
    <location>
        <position position="151"/>
    </location>
</feature>
<feature type="cross-link" description="Glycyl lysine isopeptide (Lys-Gly) (interchain with G-Cter in SUMO2)" evidence="18">
    <location>
        <position position="259"/>
    </location>
</feature>
<feature type="cross-link" description="Glycyl lysine isopeptide (Lys-Gly) (interchain with G-Cter in SUMO2)" evidence="18">
    <location>
        <position position="550"/>
    </location>
</feature>
<feature type="cross-link" description="Glycyl lysine isopeptide (Lys-Gly) (interchain with G-Cter in SUMO2)" evidence="16 18">
    <location>
        <position position="557"/>
    </location>
</feature>
<feature type="cross-link" description="Glycyl lysine isopeptide (Lys-Gly) (interchain with G-Cter in SUMO2)" evidence="18">
    <location>
        <position position="754"/>
    </location>
</feature>
<feature type="cross-link" description="Glycyl lysine isopeptide (Lys-Gly) (interchain with G-Cter in SUMO2)" evidence="15 17 18">
    <location>
        <position position="758"/>
    </location>
</feature>
<feature type="cross-link" description="Glycyl lysine isopeptide (Lys-Gly) (interchain with G-Cter in SUMO2)" evidence="18">
    <location>
        <position position="763"/>
    </location>
</feature>
<feature type="cross-link" description="Glycyl lysine isopeptide (Lys-Gly) (interchain with G-Cter in SUMO2)" evidence="18">
    <location>
        <position position="804"/>
    </location>
</feature>
<feature type="cross-link" description="Glycyl lysine isopeptide (Lys-Gly) (interchain with G-Cter in SUMO2)" evidence="15 18">
    <location>
        <position position="814"/>
    </location>
</feature>
<feature type="cross-link" description="Glycyl lysine isopeptide (Lys-Gly) (interchain with G-Cter in SUMO2)" evidence="18">
    <location>
        <position position="821"/>
    </location>
</feature>
<feature type="cross-link" description="Glycyl lysine isopeptide (Lys-Gly) (interchain with G-Cter in SUMO2)" evidence="18">
    <location>
        <position position="842"/>
    </location>
</feature>
<feature type="cross-link" description="Glycyl lysine isopeptide (Lys-Gly) (interchain with G-Cter in SUMO2)" evidence="18">
    <location>
        <position position="850"/>
    </location>
</feature>
<feature type="cross-link" description="Glycyl lysine isopeptide (Lys-Gly) (interchain with G-Cter in SUMO2)" evidence="18">
    <location>
        <position position="857"/>
    </location>
</feature>
<feature type="cross-link" description="Glycyl lysine isopeptide (Lys-Gly) (interchain with G-Cter in SUMO2)" evidence="18">
    <location>
        <position position="923"/>
    </location>
</feature>
<feature type="cross-link" description="Glycyl lysine isopeptide (Lys-Gly) (interchain with G-Cter in SUMO2)" evidence="18">
    <location>
        <position position="964"/>
    </location>
</feature>
<feature type="cross-link" description="Glycyl lysine isopeptide (Lys-Gly) (interchain with G-Cter in SUMO2)" evidence="18">
    <location>
        <position position="969"/>
    </location>
</feature>
<feature type="cross-link" description="Glycyl lysine isopeptide (Lys-Gly) (interchain with G-Cter in SUMO2)" evidence="15 16 18">
    <location>
        <position position="977"/>
    </location>
</feature>
<feature type="cross-link" description="Glycyl lysine isopeptide (Lys-Gly) (interchain with G-Cter in SUMO2)" evidence="18">
    <location>
        <position position="981"/>
    </location>
</feature>
<feature type="cross-link" description="Glycyl lysine isopeptide (Lys-Gly) (interchain with G-Cter in SUMO2)" evidence="18">
    <location>
        <position position="991"/>
    </location>
</feature>
<feature type="cross-link" description="Glycyl lysine isopeptide (Lys-Gly) (interchain with G-Cter in SUMO2)" evidence="18">
    <location>
        <position position="1017"/>
    </location>
</feature>
<feature type="cross-link" description="Glycyl lysine isopeptide (Lys-Gly) (interchain with G-Cter in SUMO2)" evidence="18">
    <location>
        <position position="1026"/>
    </location>
</feature>
<feature type="cross-link" description="Glycyl lysine isopeptide (Lys-Gly) (interchain with G-Cter in SUMO2)" evidence="18">
    <location>
        <position position="1109"/>
    </location>
</feature>
<feature type="cross-link" description="Glycyl lysine isopeptide (Lys-Gly) (interchain with G-Cter in SUMO2)" evidence="18">
    <location>
        <position position="1132"/>
    </location>
</feature>
<feature type="cross-link" description="Glycyl lysine isopeptide (Lys-Gly) (interchain with G-Cter in SUMO2)" evidence="18">
    <location>
        <position position="1135"/>
    </location>
</feature>
<feature type="cross-link" description="Glycyl lysine isopeptide (Lys-Gly) (interchain with G-Cter in SUMO2)" evidence="18">
    <location>
        <position position="1150"/>
    </location>
</feature>
<feature type="cross-link" description="Glycyl lysine isopeptide (Lys-Gly) (interchain with G-Cter in SUMO2)" evidence="18">
    <location>
        <position position="1183"/>
    </location>
</feature>
<feature type="sequence variant" id="VAR_052917" description="In dbSNP:rs16851435.">
    <original>S</original>
    <variation>A</variation>
    <location>
        <position position="319"/>
    </location>
</feature>
<feature type="sequence variant" id="VAR_052918" description="In dbSNP:rs17787670.">
    <original>T</original>
    <variation>M</variation>
    <location>
        <position position="615"/>
    </location>
</feature>
<feature type="sequence variant" id="VAR_052919" description="In dbSNP:rs3732867.">
    <original>A</original>
    <variation>T</variation>
    <location>
        <position position="809"/>
    </location>
</feature>
<feature type="sequence variant" id="VAR_079610" description="Found in patients with pathologic myopia; uncertain significance; dbSNP:rs202147729." evidence="9">
    <original>V</original>
    <variation>I</variation>
    <location>
        <position position="1067"/>
    </location>
</feature>
<feature type="turn" evidence="19">
    <location>
        <begin position="1013"/>
        <end position="1015"/>
    </location>
</feature>
<feature type="strand" evidence="19">
    <location>
        <begin position="1018"/>
        <end position="1021"/>
    </location>
</feature>
<feature type="helix" evidence="19">
    <location>
        <begin position="1022"/>
        <end position="1033"/>
    </location>
</feature>
<feature type="turn" evidence="19">
    <location>
        <begin position="1041"/>
        <end position="1043"/>
    </location>
</feature>
<feature type="strand" evidence="19">
    <location>
        <begin position="1046"/>
        <end position="1049"/>
    </location>
</feature>
<feature type="helix" evidence="19">
    <location>
        <begin position="1050"/>
        <end position="1061"/>
    </location>
</feature>
<feature type="turn" evidence="19">
    <location>
        <begin position="1069"/>
        <end position="1071"/>
    </location>
</feature>
<feature type="strand" evidence="19">
    <location>
        <begin position="1074"/>
        <end position="1077"/>
    </location>
</feature>
<feature type="helix" evidence="19">
    <location>
        <begin position="1078"/>
        <end position="1089"/>
    </location>
</feature>
<feature type="strand" evidence="19">
    <location>
        <begin position="1097"/>
        <end position="1100"/>
    </location>
</feature>
<feature type="strand" evidence="19">
    <location>
        <begin position="1102"/>
        <end position="1105"/>
    </location>
</feature>
<feature type="helix" evidence="19">
    <location>
        <begin position="1106"/>
        <end position="1118"/>
    </location>
</feature>
<keyword id="KW-0002">3D-structure</keyword>
<keyword id="KW-0010">Activator</keyword>
<keyword id="KW-0158">Chromosome</keyword>
<keyword id="KW-0238">DNA-binding</keyword>
<keyword id="KW-1017">Isopeptide bond</keyword>
<keyword id="KW-0479">Metal-binding</keyword>
<keyword id="KW-0539">Nucleus</keyword>
<keyword id="KW-0597">Phosphoprotein</keyword>
<keyword id="KW-1267">Proteomics identification</keyword>
<keyword id="KW-1185">Reference proteome</keyword>
<keyword id="KW-0677">Repeat</keyword>
<keyword id="KW-0678">Repressor</keyword>
<keyword id="KW-0804">Transcription</keyword>
<keyword id="KW-0805">Transcription regulation</keyword>
<keyword id="KW-0832">Ubl conjugation</keyword>
<keyword id="KW-0862">Zinc</keyword>
<keyword id="KW-0863">Zinc-finger</keyword>
<evidence type="ECO:0000250" key="1">
    <source>
        <dbReference type="UniProtKB" id="Q5EXX3"/>
    </source>
</evidence>
<evidence type="ECO:0000255" key="2">
    <source>
        <dbReference type="PROSITE-ProRule" id="PRU00037"/>
    </source>
</evidence>
<evidence type="ECO:0000255" key="3">
    <source>
        <dbReference type="PROSITE-ProRule" id="PRU00042"/>
    </source>
</evidence>
<evidence type="ECO:0000256" key="4">
    <source>
        <dbReference type="SAM" id="MobiDB-lite"/>
    </source>
</evidence>
<evidence type="ECO:0000269" key="5">
    <source>
    </source>
</evidence>
<evidence type="ECO:0000269" key="6">
    <source>
    </source>
</evidence>
<evidence type="ECO:0000269" key="7">
    <source>
    </source>
</evidence>
<evidence type="ECO:0000269" key="8">
    <source>
    </source>
</evidence>
<evidence type="ECO:0000269" key="9">
    <source>
    </source>
</evidence>
<evidence type="ECO:0000305" key="10"/>
<evidence type="ECO:0000312" key="11">
    <source>
        <dbReference type="EMBL" id="BAC03868.1"/>
    </source>
</evidence>
<evidence type="ECO:0000312" key="12">
    <source>
        <dbReference type="HGNC" id="HGNC:26636"/>
    </source>
</evidence>
<evidence type="ECO:0007744" key="13">
    <source>
    </source>
</evidence>
<evidence type="ECO:0007744" key="14">
    <source>
    </source>
</evidence>
<evidence type="ECO:0007744" key="15">
    <source>
    </source>
</evidence>
<evidence type="ECO:0007744" key="16">
    <source>
    </source>
</evidence>
<evidence type="ECO:0007744" key="17">
    <source>
    </source>
</evidence>
<evidence type="ECO:0007744" key="18">
    <source>
    </source>
</evidence>
<evidence type="ECO:0007829" key="19">
    <source>
        <dbReference type="PDB" id="6E94"/>
    </source>
</evidence>
<proteinExistence type="evidence at protein level"/>
<reference key="1">
    <citation type="journal article" date="2006" name="Nature">
        <title>The DNA sequence, annotation and analysis of human chromosome 3.</title>
        <authorList>
            <person name="Muzny D.M."/>
            <person name="Scherer S.E."/>
            <person name="Kaul R."/>
            <person name="Wang J."/>
            <person name="Yu J."/>
            <person name="Sudbrak R."/>
            <person name="Buhay C.J."/>
            <person name="Chen R."/>
            <person name="Cree A."/>
            <person name="Ding Y."/>
            <person name="Dugan-Rocha S."/>
            <person name="Gill R."/>
            <person name="Gunaratne P."/>
            <person name="Harris R.A."/>
            <person name="Hawes A.C."/>
            <person name="Hernandez J."/>
            <person name="Hodgson A.V."/>
            <person name="Hume J."/>
            <person name="Jackson A."/>
            <person name="Khan Z.M."/>
            <person name="Kovar-Smith C."/>
            <person name="Lewis L.R."/>
            <person name="Lozado R.J."/>
            <person name="Metzker M.L."/>
            <person name="Milosavljevic A."/>
            <person name="Miner G.R."/>
            <person name="Morgan M.B."/>
            <person name="Nazareth L.V."/>
            <person name="Scott G."/>
            <person name="Sodergren E."/>
            <person name="Song X.-Z."/>
            <person name="Steffen D."/>
            <person name="Wei S."/>
            <person name="Wheeler D.A."/>
            <person name="Wright M.W."/>
            <person name="Worley K.C."/>
            <person name="Yuan Y."/>
            <person name="Zhang Z."/>
            <person name="Adams C.Q."/>
            <person name="Ansari-Lari M.A."/>
            <person name="Ayele M."/>
            <person name="Brown M.J."/>
            <person name="Chen G."/>
            <person name="Chen Z."/>
            <person name="Clendenning J."/>
            <person name="Clerc-Blankenburg K.P."/>
            <person name="Chen R."/>
            <person name="Chen Z."/>
            <person name="Davis C."/>
            <person name="Delgado O."/>
            <person name="Dinh H.H."/>
            <person name="Dong W."/>
            <person name="Draper H."/>
            <person name="Ernst S."/>
            <person name="Fu G."/>
            <person name="Gonzalez-Garay M.L."/>
            <person name="Garcia D.K."/>
            <person name="Gillett W."/>
            <person name="Gu J."/>
            <person name="Hao B."/>
            <person name="Haugen E."/>
            <person name="Havlak P."/>
            <person name="He X."/>
            <person name="Hennig S."/>
            <person name="Hu S."/>
            <person name="Huang W."/>
            <person name="Jackson L.R."/>
            <person name="Jacob L.S."/>
            <person name="Kelly S.H."/>
            <person name="Kube M."/>
            <person name="Levy R."/>
            <person name="Li Z."/>
            <person name="Liu B."/>
            <person name="Liu J."/>
            <person name="Liu W."/>
            <person name="Lu J."/>
            <person name="Maheshwari M."/>
            <person name="Nguyen B.-V."/>
            <person name="Okwuonu G.O."/>
            <person name="Palmeiri A."/>
            <person name="Pasternak S."/>
            <person name="Perez L.M."/>
            <person name="Phelps K.A."/>
            <person name="Plopper F.J."/>
            <person name="Qiang B."/>
            <person name="Raymond C."/>
            <person name="Rodriguez R."/>
            <person name="Saenphimmachak C."/>
            <person name="Santibanez J."/>
            <person name="Shen H."/>
            <person name="Shen Y."/>
            <person name="Subramanian S."/>
            <person name="Tabor P.E."/>
            <person name="Verduzco D."/>
            <person name="Waldron L."/>
            <person name="Wang J."/>
            <person name="Wang J."/>
            <person name="Wang Q."/>
            <person name="Williams G.A."/>
            <person name="Wong G.K.-S."/>
            <person name="Yao Z."/>
            <person name="Zhang J."/>
            <person name="Zhang X."/>
            <person name="Zhao G."/>
            <person name="Zhou J."/>
            <person name="Zhou Y."/>
            <person name="Nelson D."/>
            <person name="Lehrach H."/>
            <person name="Reinhardt R."/>
            <person name="Naylor S.L."/>
            <person name="Yang H."/>
            <person name="Olson M."/>
            <person name="Weinstock G."/>
            <person name="Gibbs R.A."/>
        </authorList>
    </citation>
    <scope>NUCLEOTIDE SEQUENCE [LARGE SCALE GENOMIC DNA]</scope>
</reference>
<reference key="2">
    <citation type="submission" date="2005-09" db="EMBL/GenBank/DDBJ databases">
        <authorList>
            <person name="Mural R.J."/>
            <person name="Istrail S."/>
            <person name="Sutton G.G."/>
            <person name="Florea L."/>
            <person name="Halpern A.L."/>
            <person name="Mobarry C.M."/>
            <person name="Lippert R."/>
            <person name="Walenz B."/>
            <person name="Shatkay H."/>
            <person name="Dew I."/>
            <person name="Miller J.R."/>
            <person name="Flanigan M.J."/>
            <person name="Edwards N.J."/>
            <person name="Bolanos R."/>
            <person name="Fasulo D."/>
            <person name="Halldorsson B.V."/>
            <person name="Hannenhalli S."/>
            <person name="Turner R."/>
            <person name="Yooseph S."/>
            <person name="Lu F."/>
            <person name="Nusskern D.R."/>
            <person name="Shue B.C."/>
            <person name="Zheng X.H."/>
            <person name="Zhong F."/>
            <person name="Delcher A.L."/>
            <person name="Huson D.H."/>
            <person name="Kravitz S.A."/>
            <person name="Mouchard L."/>
            <person name="Reinert K."/>
            <person name="Remington K.A."/>
            <person name="Clark A.G."/>
            <person name="Waterman M.S."/>
            <person name="Eichler E.E."/>
            <person name="Adams M.D."/>
            <person name="Hunkapiller M.W."/>
            <person name="Myers E.W."/>
            <person name="Venter J.C."/>
        </authorList>
    </citation>
    <scope>NUCLEOTIDE SEQUENCE [LARGE SCALE GENOMIC DNA]</scope>
</reference>
<reference evidence="11" key="3">
    <citation type="journal article" date="2004" name="Nat. Genet.">
        <title>Complete sequencing and characterization of 21,243 full-length human cDNAs.</title>
        <authorList>
            <person name="Ota T."/>
            <person name="Suzuki Y."/>
            <person name="Nishikawa T."/>
            <person name="Otsuki T."/>
            <person name="Sugiyama T."/>
            <person name="Irie R."/>
            <person name="Wakamatsu A."/>
            <person name="Hayashi K."/>
            <person name="Sato H."/>
            <person name="Nagai K."/>
            <person name="Kimura K."/>
            <person name="Makita H."/>
            <person name="Sekine M."/>
            <person name="Obayashi M."/>
            <person name="Nishi T."/>
            <person name="Shibahara T."/>
            <person name="Tanaka T."/>
            <person name="Ishii S."/>
            <person name="Yamamoto J."/>
            <person name="Saito K."/>
            <person name="Kawai Y."/>
            <person name="Isono Y."/>
            <person name="Nakamura Y."/>
            <person name="Nagahari K."/>
            <person name="Murakami K."/>
            <person name="Yasuda T."/>
            <person name="Iwayanagi T."/>
            <person name="Wagatsuma M."/>
            <person name="Shiratori A."/>
            <person name="Sudo H."/>
            <person name="Hosoiri T."/>
            <person name="Kaku Y."/>
            <person name="Kodaira H."/>
            <person name="Kondo H."/>
            <person name="Sugawara M."/>
            <person name="Takahashi M."/>
            <person name="Kanda K."/>
            <person name="Yokoi T."/>
            <person name="Furuya T."/>
            <person name="Kikkawa E."/>
            <person name="Omura Y."/>
            <person name="Abe K."/>
            <person name="Kamihara K."/>
            <person name="Katsuta N."/>
            <person name="Sato K."/>
            <person name="Tanikawa M."/>
            <person name="Yamazaki M."/>
            <person name="Ninomiya K."/>
            <person name="Ishibashi T."/>
            <person name="Yamashita H."/>
            <person name="Murakawa K."/>
            <person name="Fujimori K."/>
            <person name="Tanai H."/>
            <person name="Kimata M."/>
            <person name="Watanabe M."/>
            <person name="Hiraoka S."/>
            <person name="Chiba Y."/>
            <person name="Ishida S."/>
            <person name="Ono Y."/>
            <person name="Takiguchi S."/>
            <person name="Watanabe S."/>
            <person name="Yosida M."/>
            <person name="Hotuta T."/>
            <person name="Kusano J."/>
            <person name="Kanehori K."/>
            <person name="Takahashi-Fujii A."/>
            <person name="Hara H."/>
            <person name="Tanase T.-O."/>
            <person name="Nomura Y."/>
            <person name="Togiya S."/>
            <person name="Komai F."/>
            <person name="Hara R."/>
            <person name="Takeuchi K."/>
            <person name="Arita M."/>
            <person name="Imose N."/>
            <person name="Musashino K."/>
            <person name="Yuuki H."/>
            <person name="Oshima A."/>
            <person name="Sasaki N."/>
            <person name="Aotsuka S."/>
            <person name="Yoshikawa Y."/>
            <person name="Matsunawa H."/>
            <person name="Ichihara T."/>
            <person name="Shiohata N."/>
            <person name="Sano S."/>
            <person name="Moriya S."/>
            <person name="Momiyama H."/>
            <person name="Satoh N."/>
            <person name="Takami S."/>
            <person name="Terashima Y."/>
            <person name="Suzuki O."/>
            <person name="Nakagawa S."/>
            <person name="Senoh A."/>
            <person name="Mizoguchi H."/>
            <person name="Goto Y."/>
            <person name="Shimizu F."/>
            <person name="Wakebe H."/>
            <person name="Hishigaki H."/>
            <person name="Watanabe T."/>
            <person name="Sugiyama A."/>
            <person name="Takemoto M."/>
            <person name="Kawakami B."/>
            <person name="Yamazaki M."/>
            <person name="Watanabe K."/>
            <person name="Kumagai A."/>
            <person name="Itakura S."/>
            <person name="Fukuzumi Y."/>
            <person name="Fujimori Y."/>
            <person name="Komiyama M."/>
            <person name="Tashiro H."/>
            <person name="Tanigami A."/>
            <person name="Fujiwara T."/>
            <person name="Ono T."/>
            <person name="Yamada K."/>
            <person name="Fujii Y."/>
            <person name="Ozaki K."/>
            <person name="Hirao M."/>
            <person name="Ohmori Y."/>
            <person name="Kawabata A."/>
            <person name="Hikiji T."/>
            <person name="Kobatake N."/>
            <person name="Inagaki H."/>
            <person name="Ikema Y."/>
            <person name="Okamoto S."/>
            <person name="Okitani R."/>
            <person name="Kawakami T."/>
            <person name="Noguchi S."/>
            <person name="Itoh T."/>
            <person name="Shigeta K."/>
            <person name="Senba T."/>
            <person name="Matsumura K."/>
            <person name="Nakajima Y."/>
            <person name="Mizuno T."/>
            <person name="Morinaga M."/>
            <person name="Sasaki M."/>
            <person name="Togashi T."/>
            <person name="Oyama M."/>
            <person name="Hata H."/>
            <person name="Watanabe M."/>
            <person name="Komatsu T."/>
            <person name="Mizushima-Sugano J."/>
            <person name="Satoh T."/>
            <person name="Shirai Y."/>
            <person name="Takahashi Y."/>
            <person name="Nakagawa K."/>
            <person name="Okumura K."/>
            <person name="Nagase T."/>
            <person name="Nomura N."/>
            <person name="Kikuchi H."/>
            <person name="Masuho Y."/>
            <person name="Yamashita R."/>
            <person name="Nakai K."/>
            <person name="Yada T."/>
            <person name="Nakamura Y."/>
            <person name="Ohara O."/>
            <person name="Isogai T."/>
            <person name="Sugano S."/>
        </authorList>
    </citation>
    <scope>NUCLEOTIDE SEQUENCE [LARGE SCALE MRNA] OF 1-775</scope>
    <source>
        <tissue evidence="11">Brain</tissue>
    </source>
</reference>
<reference key="4">
    <citation type="journal article" date="2006" name="Cell">
        <title>Global, in vivo, and site-specific phosphorylation dynamics in signaling networks.</title>
        <authorList>
            <person name="Olsen J.V."/>
            <person name="Blagoev B."/>
            <person name="Gnad F."/>
            <person name="Macek B."/>
            <person name="Kumar C."/>
            <person name="Mortensen P."/>
            <person name="Mann M."/>
        </authorList>
    </citation>
    <scope>PHOSPHORYLATION [LARGE SCALE ANALYSIS] AT SER-309</scope>
    <scope>IDENTIFICATION BY MASS SPECTROMETRY [LARGE SCALE ANALYSIS]</scope>
    <source>
        <tissue>Cervix carcinoma</tissue>
    </source>
</reference>
<reference key="5">
    <citation type="journal article" date="2006" name="Mol. Cell. Biol.">
        <title>A family of human zinc finger proteins that bind methylated DNA and repress transcription.</title>
        <authorList>
            <person name="Filion G.J."/>
            <person name="Zhenilo S."/>
            <person name="Salozhin S."/>
            <person name="Yamada D."/>
            <person name="Prokhortchouk E."/>
            <person name="Defossez P.A."/>
        </authorList>
    </citation>
    <scope>FUNCTION</scope>
    <scope>DNA-BINDING</scope>
    <scope>SUBCELLULAR LOCATION</scope>
    <scope>INTERACTION WITH ZBTB4</scope>
</reference>
<reference key="6">
    <citation type="journal article" date="2008" name="Nat. Genet.">
        <title>Genome-wide association analysis identifies 20 loci that influence adult height.</title>
        <authorList>
            <consortium name="Diabetes Genetics Initiative"/>
            <consortium name="Wellcome Trust Case Control Consortium"/>
            <consortium name="Cambridge GEM Consortium"/>
            <person name="Weedon M.N."/>
            <person name="Lango H."/>
            <person name="Lindgren C.M."/>
            <person name="Wallace C."/>
            <person name="Evans D.M."/>
            <person name="Mangino M."/>
            <person name="Freathy R.M."/>
            <person name="Perry J.R."/>
            <person name="Stevens S."/>
            <person name="Hall A.S."/>
            <person name="Samani N.J."/>
            <person name="Shields B."/>
            <person name="Prokopenko I."/>
            <person name="Farrall M."/>
            <person name="Dominiczak A."/>
            <person name="Johnson T."/>
            <person name="Bergmann S."/>
            <person name="Beckmann J.S."/>
            <person name="Vollenweider P."/>
            <person name="Waterworth D.M."/>
            <person name="Mooser V."/>
            <person name="Palmer C.N."/>
            <person name="Morris A.D."/>
            <person name="Ouwehand W.H."/>
            <person name="Zhao J.H."/>
            <person name="Li S."/>
            <person name="Loos R.J."/>
            <person name="Barroso I."/>
            <person name="Deloukas P."/>
            <person name="Sandhu M.S."/>
            <person name="Wheeler E."/>
            <person name="Soranzo N."/>
            <person name="Inouye M."/>
            <person name="Wareham N.J."/>
            <person name="Caulfield M."/>
            <person name="Munroe P.B."/>
            <person name="Hattersley A.T."/>
            <person name="McCarthy M.I."/>
            <person name="Frayling T.M."/>
        </authorList>
    </citation>
    <scope>POLYMORPHISM</scope>
</reference>
<reference key="7">
    <citation type="journal article" date="2008" name="Proc. Natl. Acad. Sci. U.S.A.">
        <title>A quantitative atlas of mitotic phosphorylation.</title>
        <authorList>
            <person name="Dephoure N."/>
            <person name="Zhou C."/>
            <person name="Villen J."/>
            <person name="Beausoleil S.A."/>
            <person name="Bakalarski C.E."/>
            <person name="Elledge S.J."/>
            <person name="Gygi S.P."/>
        </authorList>
    </citation>
    <scope>PHOSPHORYLATION [LARGE SCALE ANALYSIS] AT SER-130</scope>
    <scope>IDENTIFICATION BY MASS SPECTROMETRY [LARGE SCALE ANALYSIS]</scope>
    <source>
        <tissue>Cervix carcinoma</tissue>
    </source>
</reference>
<reference key="8">
    <citation type="journal article" date="2012" name="PLoS ONE">
        <title>Kaiso directs the transcriptional corepressor MTG16 to the Kaiso binding site in target promoters.</title>
        <authorList>
            <person name="Barrett C.W."/>
            <person name="Smith J.J."/>
            <person name="Lu L.C."/>
            <person name="Markham N."/>
            <person name="Stengel K.R."/>
            <person name="Short S.P."/>
            <person name="Zhang B."/>
            <person name="Hunt A.A."/>
            <person name="Fingleton B.M."/>
            <person name="Carnahan R.H."/>
            <person name="Engel M.E."/>
            <person name="Chen X."/>
            <person name="Beauchamp R.D."/>
            <person name="Wilson K.T."/>
            <person name="Hiebert S.W."/>
            <person name="Reynolds A.B."/>
            <person name="Williams C.S."/>
        </authorList>
    </citation>
    <scope>INTERACTION WITH CBFA2T3</scope>
</reference>
<reference key="9">
    <citation type="journal article" date="2014" name="Cell Rep.">
        <title>The RBBP6/ZBTB38/MCM10 axis regulates DNA replication and common fragile site stability.</title>
        <authorList>
            <person name="Miotto B."/>
            <person name="Chibi M."/>
            <person name="Xie P."/>
            <person name="Koundrioukoff S."/>
            <person name="Moolman-Smook H."/>
            <person name="Pugh D."/>
            <person name="Debatisse M."/>
            <person name="He F."/>
            <person name="Zhang L."/>
            <person name="Defossez P.A."/>
        </authorList>
    </citation>
    <scope>FUNCTION</scope>
    <scope>INTERACTION WITH RBBP6</scope>
    <scope>UBIQUITINATION</scope>
</reference>
<reference key="10">
    <citation type="journal article" date="2014" name="Nat. Struct. Mol. Biol.">
        <title>Uncovering global SUMOylation signaling networks in a site-specific manner.</title>
        <authorList>
            <person name="Hendriks I.A."/>
            <person name="D'Souza R.C."/>
            <person name="Yang B."/>
            <person name="Verlaan-de Vries M."/>
            <person name="Mann M."/>
            <person name="Vertegaal A.C."/>
        </authorList>
    </citation>
    <scope>SUMOYLATION [LARGE SCALE ANALYSIS] AT LYS-43; LYS-145; LYS-758; LYS-814 AND LYS-977</scope>
    <scope>IDENTIFICATION BY MASS SPECTROMETRY [LARGE SCALE ANALYSIS]</scope>
</reference>
<reference key="11">
    <citation type="journal article" date="2015" name="Cell Rep.">
        <title>SUMO-2 orchestrates chromatin modifiers in response to DNA damage.</title>
        <authorList>
            <person name="Hendriks I.A."/>
            <person name="Treffers L.W."/>
            <person name="Verlaan-de Vries M."/>
            <person name="Olsen J.V."/>
            <person name="Vertegaal A.C."/>
        </authorList>
    </citation>
    <scope>SUMOYLATION [LARGE SCALE ANALYSIS] AT LYS-43; LYS-145 AND LYS-758</scope>
    <scope>IDENTIFICATION BY MASS SPECTROMETRY [LARGE SCALE ANALYSIS]</scope>
</reference>
<reference key="12">
    <citation type="journal article" date="2015" name="Mol. Cell. Proteomics">
        <title>System-wide analysis of SUMOylation dynamics in response to replication stress reveals novel small ubiquitin-like modified target proteins and acceptor lysines relevant for genome stability.</title>
        <authorList>
            <person name="Xiao Z."/>
            <person name="Chang J.G."/>
            <person name="Hendriks I.A."/>
            <person name="Sigurdsson J.O."/>
            <person name="Olsen J.V."/>
            <person name="Vertegaal A.C."/>
        </authorList>
    </citation>
    <scope>SUMOYLATION [LARGE SCALE ANALYSIS] AT LYS-43; LYS-145; LYS-557 AND LYS-977</scope>
    <scope>IDENTIFICATION BY MASS SPECTROMETRY [LARGE SCALE ANALYSIS]</scope>
</reference>
<reference key="13">
    <citation type="journal article" date="2017" name="Nat. Struct. Mol. Biol.">
        <title>Site-specific mapping of the human SUMO proteome reveals co-modification with phosphorylation.</title>
        <authorList>
            <person name="Hendriks I.A."/>
            <person name="Lyon D."/>
            <person name="Young C."/>
            <person name="Jensen L.J."/>
            <person name="Vertegaal A.C."/>
            <person name="Nielsen M.L."/>
        </authorList>
    </citation>
    <scope>SUMOYLATION [LARGE SCALE ANALYSIS] AT LYS-43; LYS-148; LYS-151; LYS-259; LYS-550; LYS-557; LYS-754; LYS-758; LYS-763; LYS-804; LYS-814; LYS-821; LYS-842; LYS-850; LYS-857; LYS-923; LYS-964; LYS-969; LYS-977; LYS-981; LYS-991; LYS-1017; LYS-1026; LYS-1109; LYS-1132; LYS-1135; LYS-1150 AND LYS-1183</scope>
    <scope>IDENTIFICATION BY MASS SPECTROMETRY [LARGE SCALE ANALYSIS]</scope>
</reference>
<reference key="14">
    <citation type="journal article" date="2017" name="Invest. Ophthalmol. Vis. Sci.">
        <title>A novel potentially causative variant of NDUFAF7 revealed by mutation screening in a chinese family with pathologic myopia.</title>
        <authorList>
            <person name="Wang B."/>
            <person name="Liu Y."/>
            <person name="Chen S."/>
            <person name="Wu Y."/>
            <person name="Lin S."/>
            <person name="Duan Y."/>
            <person name="Zheng K."/>
            <person name="Zhang L."/>
            <person name="Gu X."/>
            <person name="Hong W."/>
            <person name="Shao H."/>
            <person name="Zeng X."/>
            <person name="Sun B."/>
            <person name="Duan S."/>
        </authorList>
    </citation>
    <scope>VARIANT ILE-1067</scope>
</reference>